<reference key="1">
    <citation type="journal article" date="2000" name="Mol. Microbiol.">
        <title>The virulence plasmid pWR100 and the repertoire of proteins secreted by the type III secretion apparatus of Shigella flexneri.</title>
        <authorList>
            <person name="Buchrieser C."/>
            <person name="Glaser P."/>
            <person name="Rusniok C."/>
            <person name="Nedjari H."/>
            <person name="d'Hauteville H."/>
            <person name="Kunst F."/>
            <person name="Sansonetti P.J."/>
            <person name="Parsot C."/>
        </authorList>
    </citation>
    <scope>NUCLEOTIDE SEQUENCE [GENOMIC DNA]</scope>
    <scope>PROTEIN SEQUENCE OF 1-8</scope>
    <scope>SUBCELLULAR LOCATION</scope>
    <source>
        <strain>M90T / Serotype 5a</strain>
        <plasmid>pWR100</plasmid>
    </source>
</reference>
<reference key="2">
    <citation type="journal article" date="2001" name="Infect. Immun.">
        <title>Complete DNA sequence and analysis of the large virulence plasmid of Shigella flexneri.</title>
        <authorList>
            <person name="Venkatesan M.M."/>
            <person name="Goldberg M.B."/>
            <person name="Rose D.J."/>
            <person name="Grotbeck E.J."/>
            <person name="Burland V."/>
            <person name="Blattner F.R."/>
        </authorList>
    </citation>
    <scope>NUCLEOTIDE SEQUENCE [GENOMIC DNA]</scope>
    <source>
        <strain>M90T / Serotype 5a</strain>
        <plasmid>pWR501</plasmid>
    </source>
</reference>
<reference key="3">
    <citation type="journal article" date="2006" name="Sci. China, Ser. C, Life Sci.">
        <title>Comparison of the virulence plasmid genomes of two strains of Shigella which lost the ability to bind Congo red.</title>
        <authorList>
            <person name="Xiong Z."/>
            <person name="Tang X."/>
            <person name="Yang F."/>
            <person name="Zhang X."/>
            <person name="Yang J."/>
            <person name="Chen L."/>
            <person name="Nie H."/>
            <person name="Yan Y."/>
            <person name="Jiang Y."/>
            <person name="Wang J."/>
            <person name="Xue Y."/>
            <person name="Xu X."/>
            <person name="Zhu Y."/>
            <person name="Dong J."/>
            <person name="An L."/>
            <person name="Wang X."/>
            <person name="Jin Q."/>
        </authorList>
    </citation>
    <scope>NUCLEOTIDE SEQUENCE [GENOMIC DNA]</scope>
    <source>
        <strain>Serotype 5</strain>
        <plasmid>pSF5</plasmid>
    </source>
</reference>
<reference key="4">
    <citation type="journal article" date="2002" name="Nucleic Acids Res.">
        <title>Genome sequence of Shigella flexneri 2a: insights into pathogenicity through comparison with genomes of Escherichia coli K12 and O157.</title>
        <authorList>
            <person name="Jin Q."/>
            <person name="Yuan Z."/>
            <person name="Xu J."/>
            <person name="Wang Y."/>
            <person name="Shen Y."/>
            <person name="Lu W."/>
            <person name="Wang J."/>
            <person name="Liu H."/>
            <person name="Yang J."/>
            <person name="Yang F."/>
            <person name="Zhang X."/>
            <person name="Zhang J."/>
            <person name="Yang G."/>
            <person name="Wu H."/>
            <person name="Qu D."/>
            <person name="Dong J."/>
            <person name="Sun L."/>
            <person name="Xue Y."/>
            <person name="Zhao A."/>
            <person name="Gao Y."/>
            <person name="Zhu J."/>
            <person name="Kan B."/>
            <person name="Ding K."/>
            <person name="Chen S."/>
            <person name="Cheng H."/>
            <person name="Yao Z."/>
            <person name="He B."/>
            <person name="Chen R."/>
            <person name="Ma D."/>
            <person name="Qiang B."/>
            <person name="Wen Y."/>
            <person name="Hou Y."/>
            <person name="Yu J."/>
        </authorList>
    </citation>
    <scope>NUCLEOTIDE SEQUENCE [LARGE SCALE GENOMIC DNA]</scope>
    <source>
        <strain>301 / Serotype 2a</strain>
        <plasmid>pCP301</plasmid>
    </source>
</reference>
<reference key="5">
    <citation type="journal article" date="1990" name="J. Bacteriol.">
        <title>Sequence and molecular characterization of a multicopy invasion plasmid antigen gene, ipaH, of Shigella flexneri.</title>
        <authorList>
            <person name="Hartman A.B."/>
            <person name="Venkatesan M.M."/>
            <person name="Oaks E.V."/>
            <person name="Buysse J.M."/>
        </authorList>
    </citation>
    <scope>NUCLEOTIDE SEQUENCE [GENOMIC DNA] OF 34-565</scope>
    <source>
        <strain>M90T / Serotype 5a</strain>
    </source>
</reference>
<reference key="6">
    <citation type="journal article" date="2001" name="J. Biol. Chem.">
        <title>Shigella protein IpaH(9.8) is secreted from bacteria within mammalian cells and transported to the nucleus.</title>
        <authorList>
            <person name="Toyotome T."/>
            <person name="Suzuki T."/>
            <person name="Kuwae A."/>
            <person name="Nonaka T."/>
            <person name="Fukuda H."/>
            <person name="Imajoh-Ohmi S."/>
            <person name="Toyofuku T."/>
            <person name="Hori M."/>
            <person name="Sasakawa C."/>
        </authorList>
    </citation>
    <scope>SUBCELLULAR LOCATION</scope>
    <scope>SECRETION VIA TYPE III SECRETION SYSTEM</scope>
    <source>
        <strain>YSH6000 / Serotype 2a</strain>
    </source>
</reference>
<reference key="7">
    <citation type="journal article" date="2019" name="Science">
        <title>Functional degradation: A mechanism of NLRP1 inflammasome activation by diverse pathogen enzymes.</title>
        <authorList>
            <person name="Sandstrom A."/>
            <person name="Mitchell P.S."/>
            <person name="Goers L."/>
            <person name="Mu E.W."/>
            <person name="Lesser C.F."/>
            <person name="Vance R.E."/>
        </authorList>
    </citation>
    <scope>FUNCTION</scope>
    <scope>CATALYTIC ACTIVITY</scope>
    <scope>PATHWAY</scope>
    <scope>ACTIVE SITE</scope>
    <scope>MUTAGENESIS OF CYS-357</scope>
</reference>
<reference key="8">
    <citation type="journal article" date="2021" name="Cell">
        <title>Pathogenic ubiquitination of GSDMB inhibits NK cell bactericidal functions.</title>
        <authorList>
            <person name="Hansen J.M."/>
            <person name="de Jong M.F."/>
            <person name="Wu Q."/>
            <person name="Zhang L.S."/>
            <person name="Heisler D.B."/>
            <person name="Alto L.T."/>
            <person name="Alto N.M."/>
        </authorList>
    </citation>
    <scope>FUNCTION</scope>
    <scope>PATHWAY</scope>
    <scope>CATALYTIC ACTIVITY</scope>
    <scope>MUTAGENESIS OF CYS-357</scope>
    <scope>ACTIVE SITE</scope>
</reference>
<reference key="9">
    <citation type="journal article" date="2021" name="Cell Host Microbe">
        <title>Shigella ubiquitin ligase IpaH7.8 targets gasdermin D for degradation to prevent pyroptosis and enable infection.</title>
        <authorList>
            <person name="Luchetti G."/>
            <person name="Roncaioli J.L."/>
            <person name="Chavez R.A."/>
            <person name="Schubert A.F."/>
            <person name="Kofoed E.M."/>
            <person name="Reja R."/>
            <person name="Cheung T.K."/>
            <person name="Liang Y."/>
            <person name="Webster J.D."/>
            <person name="Lehoux I."/>
            <person name="Skippington E."/>
            <person name="Reeder J."/>
            <person name="Haley B."/>
            <person name="Tan M.W."/>
            <person name="Rose C.M."/>
            <person name="Newton K."/>
            <person name="Kayagaki N."/>
            <person name="Vance R.E."/>
            <person name="Dixit V.M."/>
        </authorList>
    </citation>
    <scope>FUNCTION</scope>
    <scope>PATHWAY</scope>
    <scope>CATALYTIC ACTIVITY</scope>
    <scope>MUTAGENESIS OF CYS-357</scope>
    <scope>ACTIVE SITE</scope>
</reference>
<reference evidence="17" key="10">
    <citation type="journal article" date="2023" name="Nature">
        <title>Structural basis for GSDMB pore formation and its targeting by IpaH7.8.</title>
        <authorList>
            <person name="Wang C."/>
            <person name="Shivcharan S."/>
            <person name="Tian T."/>
            <person name="Wright S."/>
            <person name="Ma D."/>
            <person name="Chang J."/>
            <person name="Li K."/>
            <person name="Song K."/>
            <person name="Xu C."/>
            <person name="Rathinam V.A."/>
            <person name="Ruan J."/>
        </authorList>
    </citation>
    <scope>STRUCTURE BY ELECTRON MICROSCOPY (3.80 ANGSTROMS) IN COMPLEX WITH HOST GSDMB</scope>
    <scope>FUNCTION</scope>
    <scope>CATALYTIC ACTIVITY</scope>
    <scope>PATHWAY</scope>
    <scope>ACTIVE SITE</scope>
    <scope>MUTAGENESIS OF PHE-143; PHE-161; 165-TYR-TYR-166; ILE-181; ARG-186; HIS-209; ARG-228 AND CYS-357</scope>
</reference>
<reference evidence="18 19" key="11">
    <citation type="journal article" date="2023" name="Nature">
        <title>Structural mechanisms for regulation of GSDMB pore-forming activity.</title>
        <authorList>
            <person name="Zhong X."/>
            <person name="Zeng H."/>
            <person name="Zhou Z."/>
            <person name="Su Y."/>
            <person name="Cheng H."/>
            <person name="Hou Y."/>
            <person name="She Y."/>
            <person name="Feng N."/>
            <person name="Wang J."/>
            <person name="Shao F."/>
            <person name="Ding J."/>
        </authorList>
    </citation>
    <scope>X-RAY CRYSTALLOGRAPHY (2.70 ANGSTROMS) OF 23-262 IN COMPLEX WITH HOST GSDMB</scope>
    <scope>FUNCTION</scope>
    <scope>CATALYTIC ACTIVITY</scope>
    <scope>PATHWAY</scope>
    <scope>MUTAGENESIS OF 205-GLU--TYR-207; 228-ARG--ASN-230 AND CYS-357</scope>
    <scope>ACTIVE SITE</scope>
</reference>
<reference evidence="16" key="12">
    <citation type="journal article" date="2023" name="Nat. Commun.">
        <title>Insights into the GSDMB-mediated cellular lysis and its targeting by IpaH7.8.</title>
        <authorList>
            <person name="Yin H."/>
            <person name="Zheng J."/>
            <person name="He Q."/>
            <person name="Zhang X."/>
            <person name="Li X."/>
            <person name="Ma Y."/>
            <person name="Liang X."/>
            <person name="Gao J."/>
            <person name="Kocsis B.L."/>
            <person name="Li Z."/>
            <person name="Liu X."/>
            <person name="Alto N.M."/>
            <person name="Li L."/>
            <person name="Zhang H."/>
        </authorList>
    </citation>
    <scope>X-RAY CRYSTALLOGRAPHY (2.70 ANGSTROMS) OF 23-264 IN COMPLEX WITH HOST GSDMB</scope>
    <scope>FUNCTION</scope>
    <scope>CATALYTIC ACTIVITY</scope>
    <scope>PATHWAY</scope>
    <scope>MUTAGENESIS OF 105-ASP-ASN-106; ARG-125; ASN-146; 161-PHE--TYR-166; 205-GLU--PHE-210; 228-ARG--SER-232 AND CYS-357</scope>
    <scope>ACTIVE SITE</scope>
</reference>
<organism>
    <name type="scientific">Shigella flexneri</name>
    <dbReference type="NCBI Taxonomy" id="623"/>
    <lineage>
        <taxon>Bacteria</taxon>
        <taxon>Pseudomonadati</taxon>
        <taxon>Pseudomonadota</taxon>
        <taxon>Gammaproteobacteria</taxon>
        <taxon>Enterobacterales</taxon>
        <taxon>Enterobacteriaceae</taxon>
        <taxon>Shigella</taxon>
    </lineage>
</organism>
<evidence type="ECO:0000250" key="1">
    <source>
        <dbReference type="UniProtKB" id="D0ZPH9"/>
    </source>
</evidence>
<evidence type="ECO:0000250" key="2">
    <source>
        <dbReference type="UniProtKB" id="D0ZVG2"/>
    </source>
</evidence>
<evidence type="ECO:0000250" key="3">
    <source>
        <dbReference type="UniProtKB" id="P0CE12"/>
    </source>
</evidence>
<evidence type="ECO:0000255" key="4">
    <source>
        <dbReference type="PROSITE-ProRule" id="PRU01398"/>
    </source>
</evidence>
<evidence type="ECO:0000256" key="5">
    <source>
        <dbReference type="SAM" id="MobiDB-lite"/>
    </source>
</evidence>
<evidence type="ECO:0000269" key="6">
    <source>
    </source>
</evidence>
<evidence type="ECO:0000269" key="7">
    <source>
    </source>
</evidence>
<evidence type="ECO:0000269" key="8">
    <source>
    </source>
</evidence>
<evidence type="ECO:0000269" key="9">
    <source>
    </source>
</evidence>
<evidence type="ECO:0000269" key="10">
    <source>
    </source>
</evidence>
<evidence type="ECO:0000269" key="11">
    <source>
    </source>
</evidence>
<evidence type="ECO:0000303" key="12">
    <source>
    </source>
</evidence>
<evidence type="ECO:0000303" key="13">
    <source>
    </source>
</evidence>
<evidence type="ECO:0000305" key="14"/>
<evidence type="ECO:0000305" key="15">
    <source>
    </source>
</evidence>
<evidence type="ECO:0007744" key="16">
    <source>
        <dbReference type="PDB" id="7WJQ"/>
    </source>
</evidence>
<evidence type="ECO:0007744" key="17">
    <source>
        <dbReference type="PDB" id="8EFP"/>
    </source>
</evidence>
<evidence type="ECO:0007744" key="18">
    <source>
        <dbReference type="PDB" id="8GTJ"/>
    </source>
</evidence>
<evidence type="ECO:0007744" key="19">
    <source>
        <dbReference type="PDB" id="8GTK"/>
    </source>
</evidence>
<evidence type="ECO:0007829" key="20">
    <source>
        <dbReference type="PDB" id="3CKD"/>
    </source>
</evidence>
<evidence type="ECO:0007829" key="21">
    <source>
        <dbReference type="PDB" id="7WJQ"/>
    </source>
</evidence>
<keyword id="KW-0002">3D-structure</keyword>
<keyword id="KW-0903">Direct protein sequencing</keyword>
<keyword id="KW-1035">Host cytoplasm</keyword>
<keyword id="KW-0433">Leucine-rich repeat</keyword>
<keyword id="KW-0614">Plasmid</keyword>
<keyword id="KW-1185">Reference proteome</keyword>
<keyword id="KW-0677">Repeat</keyword>
<keyword id="KW-0964">Secreted</keyword>
<keyword id="KW-0808">Transferase</keyword>
<keyword id="KW-0832">Ubl conjugation</keyword>
<keyword id="KW-0833">Ubl conjugation pathway</keyword>
<keyword id="KW-0843">Virulence</keyword>
<gene>
    <name evidence="13" type="primary">ipaH7.8</name>
    <name type="ordered locus">CP0078</name>
    <name type="ORF">pWR501_0084</name>
    <name type="ORF">SFLP133</name>
</gene>
<dbReference type="EC" id="2.3.2.27" evidence="6 7 8 9 10 11"/>
<dbReference type="EMBL" id="AF386526">
    <property type="protein sequence ID" value="AAL72346.1"/>
    <property type="molecule type" value="Genomic_DNA"/>
</dbReference>
<dbReference type="EMBL" id="AF348706">
    <property type="protein sequence ID" value="AAK18394.1"/>
    <property type="molecule type" value="Genomic_DNA"/>
</dbReference>
<dbReference type="EMBL" id="AY879342">
    <property type="protein sequence ID" value="AAW64892.1"/>
    <property type="molecule type" value="Genomic_DNA"/>
</dbReference>
<dbReference type="EMBL" id="AL391753">
    <property type="protein sequence ID" value="CAC05787.1"/>
    <property type="molecule type" value="Genomic_DNA"/>
</dbReference>
<dbReference type="EMBL" id="M32063">
    <property type="protein sequence ID" value="AAA26526.1"/>
    <property type="status" value="ALT_FRAME"/>
    <property type="molecule type" value="Genomic_DNA"/>
</dbReference>
<dbReference type="PIR" id="A35149">
    <property type="entry name" value="A35149"/>
</dbReference>
<dbReference type="RefSeq" id="NP_085238.1">
    <property type="nucleotide sequence ID" value="NC_002698.1"/>
</dbReference>
<dbReference type="RefSeq" id="NP_858211.1">
    <property type="nucleotide sequence ID" value="NC_004851.1"/>
</dbReference>
<dbReference type="RefSeq" id="WP_010921637.1">
    <property type="nucleotide sequence ID" value="NZ_WACK01000004.1"/>
</dbReference>
<dbReference type="RefSeq" id="YP_006960361.1">
    <property type="nucleotide sequence ID" value="NC_019197.1"/>
</dbReference>
<dbReference type="RefSeq" id="YP_009062469.1">
    <property type="nucleotide sequence ID" value="NC_024996.1"/>
</dbReference>
<dbReference type="PDB" id="3CKD">
    <property type="method" value="X-ray"/>
    <property type="resolution" value="2.65 A"/>
    <property type="chains" value="A/B/C=274-560"/>
</dbReference>
<dbReference type="PDB" id="7WJQ">
    <property type="method" value="X-ray"/>
    <property type="resolution" value="2.70 A"/>
    <property type="chains" value="A=23-264"/>
</dbReference>
<dbReference type="PDB" id="8EFP">
    <property type="method" value="EM"/>
    <property type="resolution" value="3.80 A"/>
    <property type="chains" value="B=1-565"/>
</dbReference>
<dbReference type="PDB" id="8GTJ">
    <property type="method" value="X-ray"/>
    <property type="resolution" value="2.70 A"/>
    <property type="chains" value="B/D=23-262"/>
</dbReference>
<dbReference type="PDB" id="8GTK">
    <property type="method" value="X-ray"/>
    <property type="resolution" value="3.10 A"/>
    <property type="chains" value="B=23-262"/>
</dbReference>
<dbReference type="PDBsum" id="3CKD"/>
<dbReference type="PDBsum" id="7WJQ"/>
<dbReference type="PDBsum" id="8EFP"/>
<dbReference type="PDBsum" id="8GTJ"/>
<dbReference type="PDBsum" id="8GTK"/>
<dbReference type="EMDB" id="EMD-28087"/>
<dbReference type="SMR" id="P18014"/>
<dbReference type="PaxDb" id="198214-CP0078"/>
<dbReference type="GeneID" id="1238049"/>
<dbReference type="KEGG" id="sfl:CP0078"/>
<dbReference type="PATRIC" id="fig|198214.7.peg.5325"/>
<dbReference type="HOGENOM" id="CLU_018533_2_0_6"/>
<dbReference type="UniPathway" id="UPA00143"/>
<dbReference type="EvolutionaryTrace" id="P18014"/>
<dbReference type="PRO" id="PR:P18014"/>
<dbReference type="Proteomes" id="UP000001006">
    <property type="component" value="Plasmid pCP301"/>
</dbReference>
<dbReference type="GO" id="GO:0005576">
    <property type="term" value="C:extracellular region"/>
    <property type="evidence" value="ECO:0000314"/>
    <property type="project" value="UniProtKB"/>
</dbReference>
<dbReference type="GO" id="GO:0030430">
    <property type="term" value="C:host cell cytoplasm"/>
    <property type="evidence" value="ECO:0000314"/>
    <property type="project" value="UniProt"/>
</dbReference>
<dbReference type="GO" id="GO:0061630">
    <property type="term" value="F:ubiquitin protein ligase activity"/>
    <property type="evidence" value="ECO:0000314"/>
    <property type="project" value="UniProtKB"/>
</dbReference>
<dbReference type="GO" id="GO:0034055">
    <property type="term" value="P:effector-mediated activation of host programmed cell death by symbiont"/>
    <property type="evidence" value="ECO:0000315"/>
    <property type="project" value="CACAO"/>
</dbReference>
<dbReference type="GO" id="GO:0016567">
    <property type="term" value="P:protein ubiquitination"/>
    <property type="evidence" value="ECO:0007669"/>
    <property type="project" value="UniProtKB-UniPathway"/>
</dbReference>
<dbReference type="GO" id="GO:0052041">
    <property type="term" value="P:symbiont-mediated suppression of host programmed cell death"/>
    <property type="evidence" value="ECO:0000314"/>
    <property type="project" value="UniProtKB"/>
</dbReference>
<dbReference type="GO" id="GO:0006511">
    <property type="term" value="P:ubiquitin-dependent protein catabolic process"/>
    <property type="evidence" value="ECO:0000314"/>
    <property type="project" value="UniProt"/>
</dbReference>
<dbReference type="FunFam" id="1.20.58.90:FF:000007">
    <property type="entry name" value="E3 ubiquitin-protein ligase ipaH9.8"/>
    <property type="match status" value="1"/>
</dbReference>
<dbReference type="FunFam" id="1.20.1270.130:FF:000001">
    <property type="entry name" value="Invasion plasmid antigen IpaH"/>
    <property type="match status" value="1"/>
</dbReference>
<dbReference type="FunFam" id="1.20.58.360:FF:000001">
    <property type="entry name" value="Probable E3 ubiquitin-protein ligase ipaH7.8"/>
    <property type="match status" value="1"/>
</dbReference>
<dbReference type="Gene3D" id="1.20.58.90">
    <property type="match status" value="1"/>
</dbReference>
<dbReference type="Gene3D" id="3.80.10.10">
    <property type="entry name" value="Ribonuclease Inhibitor"/>
    <property type="match status" value="1"/>
</dbReference>
<dbReference type="Gene3D" id="1.20.58.360">
    <property type="entry name" value="Shigella T3SS effector IpaH defines"/>
    <property type="match status" value="1"/>
</dbReference>
<dbReference type="Gene3D" id="1.20.1270.130">
    <property type="entry name" value="Shigella T3SS effector IpaH domain"/>
    <property type="match status" value="1"/>
</dbReference>
<dbReference type="InterPro" id="IPR001611">
    <property type="entry name" value="Leu-rich_rpt"/>
</dbReference>
<dbReference type="InterPro" id="IPR051071">
    <property type="entry name" value="LRR-bact_E3_ubiq_ligases"/>
</dbReference>
<dbReference type="InterPro" id="IPR032675">
    <property type="entry name" value="LRR_dom_sf"/>
</dbReference>
<dbReference type="InterPro" id="IPR032674">
    <property type="entry name" value="LRR_E3_ligase_N"/>
</dbReference>
<dbReference type="InterPro" id="IPR029487">
    <property type="entry name" value="NEL_dom"/>
</dbReference>
<dbReference type="NCBIfam" id="NF046045">
    <property type="entry name" value="IpaH_Shig"/>
    <property type="match status" value="1"/>
</dbReference>
<dbReference type="PANTHER" id="PTHR47114">
    <property type="match status" value="1"/>
</dbReference>
<dbReference type="PANTHER" id="PTHR47114:SF2">
    <property type="entry name" value="OLIGODENDROCYTE-MYELIN GLYCOPROTEIN"/>
    <property type="match status" value="1"/>
</dbReference>
<dbReference type="Pfam" id="PF12468">
    <property type="entry name" value="LRR_TTSS"/>
    <property type="match status" value="1"/>
</dbReference>
<dbReference type="Pfam" id="PF14496">
    <property type="entry name" value="NEL"/>
    <property type="match status" value="1"/>
</dbReference>
<dbReference type="SMART" id="SM00364">
    <property type="entry name" value="LRR_BAC"/>
    <property type="match status" value="7"/>
</dbReference>
<dbReference type="SUPFAM" id="SSF52058">
    <property type="entry name" value="L domain-like"/>
    <property type="match status" value="1"/>
</dbReference>
<dbReference type="PROSITE" id="PS51450">
    <property type="entry name" value="LRR"/>
    <property type="match status" value="4"/>
</dbReference>
<dbReference type="PROSITE" id="PS52053">
    <property type="entry name" value="NEL"/>
    <property type="match status" value="1"/>
</dbReference>
<sequence>MFSVNNTHSSVSCSPSINSNSTSNEHYLRILTEWEKNSSPGEERGIAFNRLSQCFQNQEAVLNLSDLNLTSLPELPKHISALIVENNKLTSLPKLPAFLKELNADNNRLSVIPELPESLTTLSVRSNQLENLPVLPNHLTSLFVENNRLYNLPALPEKLKFLHVYYNRLTTLPDLPDKLEILCAQRNNLVTFPQFSDRNNIRQKEYYFHFNQITTLPESFSQLDSSYRINISGNPLSTRVLQSLQRLTSSPDYHGPQIYFSMSDGQQNTLHRPLADAVTAWFPENKQSDVSQIWHAFEHEEHANTFSAFLDRLSDTVSARNTSGFREQVAAWLEKLSASAELRQQSFAVAADATESCEDRVALTWNNLRKTLLVHQASEGLFDNDTGALLSLGREMFRLEILEDIARDKVRTLHFVDEIEVYLAFQTMLAEKLQLSTAVKEMRFYGVSGVTANDLRTAEAMVRSREENEFTDWFSLWGPWHAVLKRTEADRWAQAEEQKYEMLENEYSQRVADRLKASGLSGDADAEREAGAQVMRETEQQIYRQLTDEVLALRLSENGSRLHHS</sequence>
<geneLocation type="plasmid">
    <name>pWR100</name>
</geneLocation>
<geneLocation type="plasmid">
    <name>pWR501</name>
</geneLocation>
<geneLocation type="plasmid">
    <name>pCP301</name>
</geneLocation>
<geneLocation type="plasmid">
    <name>pSF5</name>
</geneLocation>
<proteinExistence type="evidence at protein level"/>
<accession>P18014</accession>
<accession>Q7BCM7</accession>
<accession>Q7BEH5</accession>
<accession>Q99Q94</accession>
<name>IPA7_SHIFL</name>
<protein>
    <recommendedName>
        <fullName>E3 ubiquitin-protein ligase ipaH7.8</fullName>
        <ecNumber evidence="6 7 8 9 10 11">2.3.2.27</ecNumber>
    </recommendedName>
    <alternativeName>
        <fullName evidence="12">Invasion plasmid antigen 7.8</fullName>
    </alternativeName>
</protein>
<comment type="function">
    <text evidence="6 7 8 9 10 11">E3 ubiquitin ligase effector protein that interferes with host's innate immunity (PubMed:30872533, PubMed:34022140, PubMed:34492225, PubMed:36599845, PubMed:36991122, PubMed:36991125). Functions to alter host cell physiology and promote bacterial survival in host tissues (PubMed:30872533, PubMed:34022140, PubMed:34492225). Catalyzes ubiquitination of human gasdermins GSDMB and GSDMD, promoting their degradation by the proteasome, thereby preventing cell death (PubMed:34022140, PubMed:34492225, PubMed:36599845, PubMed:36991122, PubMed:36991125). In contrast, activates host cell pyroptosis in mouse cells: catalyzes ubiquitination of mouse Nlrp1b allele 1 protein, releasing the cleaved C-terminal part of Nlrp1b, which polymerizes and forms the Nlrp1b inflammasome followed by host cell pyroptosis (PubMed:30872533). Does not catalyze ubiquitination of mouse GSDMD (PubMed:36599845, PubMed:36991122, PubMed:36991125).</text>
</comment>
<comment type="catalytic activity">
    <reaction evidence="6 7 8 9 10 11">
        <text>S-ubiquitinyl-[E2 ubiquitin-conjugating enzyme]-L-cysteine + [acceptor protein]-L-lysine = [E2 ubiquitin-conjugating enzyme]-L-cysteine + N(6)-ubiquitinyl-[acceptor protein]-L-lysine.</text>
        <dbReference type="EC" id="2.3.2.27"/>
    </reaction>
</comment>
<comment type="pathway">
    <text evidence="6 7 8 9 10 11">Protein modification; protein ubiquitination.</text>
</comment>
<comment type="subcellular location">
    <subcellularLocation>
        <location evidence="2">Secreted</location>
    </subcellularLocation>
    <subcellularLocation>
        <location evidence="2">Host cytoplasm</location>
    </subcellularLocation>
    <text evidence="2">Secreted via Mxi-Spa type III secretion system (T3SS), and delivered into the host cytoplasm.</text>
</comment>
<comment type="domain">
    <text evidence="1">The LRR (leucine-rich repeat) domain forms a slightly curved solenoid and may mediate interaction with target proteins.</text>
</comment>
<comment type="PTM">
    <text evidence="1">Ubiquitinated in the presence of host E1 ubiquitin-activating enzyme, E2 ubiquitin-conjugating enzyme and ubiquitin.</text>
</comment>
<comment type="similarity">
    <text evidence="4 14">Belongs to the LRR-containing bacterial E3 ligase family.</text>
</comment>
<comment type="sequence caution" evidence="14">
    <conflict type="frameshift">
        <sequence resource="EMBL-CDS" id="AAA26526"/>
    </conflict>
</comment>
<feature type="chain" id="PRO_0000084218" description="E3 ubiquitin-protein ligase ipaH7.8">
    <location>
        <begin position="1"/>
        <end position="565"/>
    </location>
</feature>
<feature type="repeat" description="LRR 1">
    <location>
        <begin position="58"/>
        <end position="79"/>
    </location>
</feature>
<feature type="repeat" description="LRR 2">
    <location>
        <begin position="80"/>
        <end position="97"/>
    </location>
</feature>
<feature type="repeat" description="LRR 3">
    <location>
        <begin position="98"/>
        <end position="119"/>
    </location>
</feature>
<feature type="repeat" description="LRR 4">
    <location>
        <begin position="120"/>
        <end position="137"/>
    </location>
</feature>
<feature type="repeat" description="LRR 5">
    <location>
        <begin position="138"/>
        <end position="157"/>
    </location>
</feature>
<feature type="repeat" description="LRR 6">
    <location>
        <begin position="158"/>
        <end position="179"/>
    </location>
</feature>
<feature type="repeat" description="LRR 7">
    <location>
        <begin position="180"/>
        <end position="199"/>
    </location>
</feature>
<feature type="repeat" description="LRR 8">
    <location>
        <begin position="202"/>
        <end position="223"/>
    </location>
</feature>
<feature type="repeat" description="LRR 9">
    <location>
        <begin position="225"/>
        <end position="248"/>
    </location>
</feature>
<feature type="domain" description="NEL" evidence="4">
    <location>
        <begin position="273"/>
        <end position="565"/>
    </location>
</feature>
<feature type="region of interest" description="Interaction with target proteins" evidence="3">
    <location>
        <begin position="1"/>
        <end position="262"/>
    </location>
</feature>
<feature type="region of interest" description="Disordered" evidence="5">
    <location>
        <begin position="1"/>
        <end position="22"/>
    </location>
</feature>
<feature type="region of interest" description="Linker" evidence="3">
    <location>
        <begin position="263"/>
        <end position="270"/>
    </location>
</feature>
<feature type="region of interest" description="E3 ubiquitin-protein ligase catalytic domain" evidence="15">
    <location>
        <begin position="271"/>
        <end position="565"/>
    </location>
</feature>
<feature type="compositionally biased region" description="Low complexity" evidence="5">
    <location>
        <begin position="9"/>
        <end position="22"/>
    </location>
</feature>
<feature type="active site" description="Glycyl thioester intermediate" evidence="4">
    <location>
        <position position="357"/>
    </location>
</feature>
<feature type="mutagenesis site" description="Abolished ability to ubiquitinate GSDMB." evidence="9">
    <original>DN</original>
    <variation>AA</variation>
    <location>
        <begin position="105"/>
        <end position="106"/>
    </location>
</feature>
<feature type="mutagenesis site" description="Abolished ability to ubiquitinate GSDMB." evidence="9">
    <original>R</original>
    <variation>A</variation>
    <location>
        <position position="125"/>
    </location>
</feature>
<feature type="mutagenesis site" description="Abolished ability to ubiquitinate GSDMB." evidence="10">
    <original>F</original>
    <variation>S</variation>
    <location>
        <position position="143"/>
    </location>
</feature>
<feature type="mutagenesis site" description="Does not affect ability to interact with host GSDMB." evidence="9">
    <original>N</original>
    <variation>A</variation>
    <location>
        <position position="146"/>
    </location>
</feature>
<feature type="mutagenesis site" description="Abolished ability to ubiquitinate GSDMB." evidence="9">
    <original>FLHVYY</original>
    <variation>ALHVAA</variation>
    <location>
        <begin position="161"/>
        <end position="166"/>
    </location>
</feature>
<feature type="mutagenesis site" description="Abolished ability to ubiquitinate GSDMB; when associated with G-181." evidence="10">
    <original>F</original>
    <variation>G</variation>
    <location>
        <position position="161"/>
    </location>
</feature>
<feature type="mutagenesis site" description="Abolished ability to ubiquitinate GSDMB." evidence="10">
    <original>YY</original>
    <variation>AA</variation>
    <variation>EE</variation>
    <location>
        <begin position="165"/>
        <end position="166"/>
    </location>
</feature>
<feature type="mutagenesis site" description="Abolished ability to ubiquitinate GSDMB; when associated with G-161." evidence="10">
    <original>I</original>
    <variation>G</variation>
    <location>
        <position position="181"/>
    </location>
</feature>
<feature type="mutagenesis site" description="Abolished ability to ubiquitinate GSDMB." evidence="10">
    <original>R</original>
    <variation>E</variation>
    <location>
        <position position="186"/>
    </location>
</feature>
<feature type="mutagenesis site" description="Abolished ability to ubiquitinate GSDMB." evidence="9">
    <original>EYYFHF</original>
    <variation>AYAFAA</variation>
    <location>
        <begin position="205"/>
        <end position="210"/>
    </location>
</feature>
<feature type="mutagenesis site" description="Abolished ability to ubiquitinate GSDMB." evidence="11">
    <original>EYY</original>
    <variation>AYA</variation>
    <location>
        <begin position="205"/>
        <end position="207"/>
    </location>
</feature>
<feature type="mutagenesis site" description="Abolished ability to ubiquitinate GSDMB." evidence="10">
    <original>H</original>
    <variation>G</variation>
    <location>
        <position position="209"/>
    </location>
</feature>
<feature type="mutagenesis site" description="Abolished ability to ubiquitinate GSDMB." evidence="9">
    <original>RINIS</original>
    <variation>AIAIA</variation>
    <location>
        <begin position="228"/>
        <end position="232"/>
    </location>
</feature>
<feature type="mutagenesis site" description="Abolished ability to ubiquitinate GSDMB." evidence="11">
    <original>RIN</original>
    <variation>DID</variation>
    <location>
        <begin position="228"/>
        <end position="230"/>
    </location>
</feature>
<feature type="mutagenesis site" description="Abolished ability to ubiquitinate GSDMB." evidence="10">
    <original>R</original>
    <variation>D</variation>
    <location>
        <position position="228"/>
    </location>
</feature>
<feature type="mutagenesis site" description="Abolished ubiquitin ligase activity and ability to ubiquitinate host Nlrp1b, GSDMB and GSDMD." evidence="6 7 8 9 10 11">
    <original>C</original>
    <variation>A</variation>
    <location>
        <position position="357"/>
    </location>
</feature>
<feature type="sequence conflict" description="In Ref. 5; AAA26526." evidence="14" ref="5">
    <original>E</original>
    <variation>Q</variation>
    <location>
        <position position="527"/>
    </location>
</feature>
<feature type="helix" evidence="21">
    <location>
        <begin position="24"/>
        <end position="35"/>
    </location>
</feature>
<feature type="helix" evidence="21">
    <location>
        <begin position="44"/>
        <end position="56"/>
    </location>
</feature>
<feature type="strand" evidence="21">
    <location>
        <begin position="60"/>
        <end position="63"/>
    </location>
</feature>
<feature type="strand" evidence="21">
    <location>
        <begin position="80"/>
        <end position="83"/>
    </location>
</feature>
<feature type="strand" evidence="21">
    <location>
        <begin position="101"/>
        <end position="103"/>
    </location>
</feature>
<feature type="strand" evidence="21">
    <location>
        <begin position="121"/>
        <end position="123"/>
    </location>
</feature>
<feature type="strand" evidence="21">
    <location>
        <begin position="141"/>
        <end position="143"/>
    </location>
</feature>
<feature type="strand" evidence="21">
    <location>
        <begin position="161"/>
        <end position="163"/>
    </location>
</feature>
<feature type="strand" evidence="21">
    <location>
        <begin position="181"/>
        <end position="183"/>
    </location>
</feature>
<feature type="strand" evidence="21">
    <location>
        <begin position="204"/>
        <end position="207"/>
    </location>
</feature>
<feature type="helix" evidence="21">
    <location>
        <begin position="218"/>
        <end position="220"/>
    </location>
</feature>
<feature type="strand" evidence="21">
    <location>
        <begin position="227"/>
        <end position="230"/>
    </location>
</feature>
<feature type="helix" evidence="21">
    <location>
        <begin position="238"/>
        <end position="247"/>
    </location>
</feature>
<feature type="strand" evidence="21">
    <location>
        <begin position="258"/>
        <end position="260"/>
    </location>
</feature>
<feature type="helix" evidence="20">
    <location>
        <begin position="274"/>
        <end position="279"/>
    </location>
</feature>
<feature type="turn" evidence="20">
    <location>
        <begin position="284"/>
        <end position="286"/>
    </location>
</feature>
<feature type="turn" evidence="20">
    <location>
        <begin position="288"/>
        <end position="290"/>
    </location>
</feature>
<feature type="turn" evidence="20">
    <location>
        <begin position="292"/>
        <end position="294"/>
    </location>
</feature>
<feature type="helix" evidence="20">
    <location>
        <begin position="295"/>
        <end position="297"/>
    </location>
</feature>
<feature type="helix" evidence="20">
    <location>
        <begin position="303"/>
        <end position="314"/>
    </location>
</feature>
<feature type="helix" evidence="20">
    <location>
        <begin position="325"/>
        <end position="338"/>
    </location>
</feature>
<feature type="helix" evidence="20">
    <location>
        <begin position="340"/>
        <end position="352"/>
    </location>
</feature>
<feature type="strand" evidence="20">
    <location>
        <begin position="356"/>
        <end position="358"/>
    </location>
</feature>
<feature type="helix" evidence="20">
    <location>
        <begin position="361"/>
        <end position="379"/>
    </location>
</feature>
<feature type="turn" evidence="20">
    <location>
        <begin position="380"/>
        <end position="384"/>
    </location>
</feature>
<feature type="helix" evidence="20">
    <location>
        <begin position="386"/>
        <end position="410"/>
    </location>
</feature>
<feature type="helix" evidence="20">
    <location>
        <begin position="418"/>
        <end position="428"/>
    </location>
</feature>
<feature type="turn" evidence="20">
    <location>
        <begin position="429"/>
        <end position="434"/>
    </location>
</feature>
<feature type="helix" evidence="20">
    <location>
        <begin position="452"/>
        <end position="474"/>
    </location>
</feature>
<feature type="helix" evidence="20">
    <location>
        <begin position="478"/>
        <end position="486"/>
    </location>
</feature>
<feature type="helix" evidence="20">
    <location>
        <begin position="489"/>
        <end position="515"/>
    </location>
</feature>
<feature type="helix" evidence="20">
    <location>
        <begin position="524"/>
        <end position="553"/>
    </location>
</feature>